<accession>A5G7W2</accession>
<organism>
    <name type="scientific">Geotalea uraniireducens (strain Rf4)</name>
    <name type="common">Geobacter uraniireducens</name>
    <dbReference type="NCBI Taxonomy" id="351605"/>
    <lineage>
        <taxon>Bacteria</taxon>
        <taxon>Pseudomonadati</taxon>
        <taxon>Thermodesulfobacteriota</taxon>
        <taxon>Desulfuromonadia</taxon>
        <taxon>Geobacterales</taxon>
        <taxon>Geobacteraceae</taxon>
        <taxon>Geotalea</taxon>
    </lineage>
</organism>
<name>DXR_GEOUR</name>
<reference key="1">
    <citation type="submission" date="2007-05" db="EMBL/GenBank/DDBJ databases">
        <title>Complete sequence of Geobacter uraniireducens Rf4.</title>
        <authorList>
            <consortium name="US DOE Joint Genome Institute"/>
            <person name="Copeland A."/>
            <person name="Lucas S."/>
            <person name="Lapidus A."/>
            <person name="Barry K."/>
            <person name="Detter J.C."/>
            <person name="Glavina del Rio T."/>
            <person name="Hammon N."/>
            <person name="Israni S."/>
            <person name="Dalin E."/>
            <person name="Tice H."/>
            <person name="Pitluck S."/>
            <person name="Chertkov O."/>
            <person name="Brettin T."/>
            <person name="Bruce D."/>
            <person name="Han C."/>
            <person name="Schmutz J."/>
            <person name="Larimer F."/>
            <person name="Land M."/>
            <person name="Hauser L."/>
            <person name="Kyrpides N."/>
            <person name="Mikhailova N."/>
            <person name="Shelobolina E."/>
            <person name="Aklujkar M."/>
            <person name="Lovley D."/>
            <person name="Richardson P."/>
        </authorList>
    </citation>
    <scope>NUCLEOTIDE SEQUENCE [LARGE SCALE GENOMIC DNA]</scope>
    <source>
        <strain>ATCC BAA-1134 / JCM 13001 / Rf4</strain>
    </source>
</reference>
<proteinExistence type="inferred from homology"/>
<comment type="function">
    <text evidence="1">Catalyzes the NADPH-dependent rearrangement and reduction of 1-deoxy-D-xylulose-5-phosphate (DXP) to 2-C-methyl-D-erythritol 4-phosphate (MEP).</text>
</comment>
<comment type="catalytic activity">
    <reaction evidence="1">
        <text>2-C-methyl-D-erythritol 4-phosphate + NADP(+) = 1-deoxy-D-xylulose 5-phosphate + NADPH + H(+)</text>
        <dbReference type="Rhea" id="RHEA:13717"/>
        <dbReference type="ChEBI" id="CHEBI:15378"/>
        <dbReference type="ChEBI" id="CHEBI:57783"/>
        <dbReference type="ChEBI" id="CHEBI:57792"/>
        <dbReference type="ChEBI" id="CHEBI:58262"/>
        <dbReference type="ChEBI" id="CHEBI:58349"/>
        <dbReference type="EC" id="1.1.1.267"/>
    </reaction>
    <physiologicalReaction direction="right-to-left" evidence="1">
        <dbReference type="Rhea" id="RHEA:13719"/>
    </physiologicalReaction>
</comment>
<comment type="cofactor">
    <cofactor evidence="1">
        <name>Mg(2+)</name>
        <dbReference type="ChEBI" id="CHEBI:18420"/>
    </cofactor>
    <cofactor evidence="1">
        <name>Mn(2+)</name>
        <dbReference type="ChEBI" id="CHEBI:29035"/>
    </cofactor>
</comment>
<comment type="pathway">
    <text evidence="1">Isoprenoid biosynthesis; isopentenyl diphosphate biosynthesis via DXP pathway; isopentenyl diphosphate from 1-deoxy-D-xylulose 5-phosphate: step 1/6.</text>
</comment>
<comment type="similarity">
    <text evidence="1">Belongs to the DXR family.</text>
</comment>
<gene>
    <name evidence="1" type="primary">dxr</name>
    <name type="ordered locus">Gura_3727</name>
</gene>
<dbReference type="EC" id="1.1.1.267" evidence="1"/>
<dbReference type="EMBL" id="CP000698">
    <property type="protein sequence ID" value="ABQ27880.1"/>
    <property type="molecule type" value="Genomic_DNA"/>
</dbReference>
<dbReference type="RefSeq" id="WP_011940531.1">
    <property type="nucleotide sequence ID" value="NC_009483.1"/>
</dbReference>
<dbReference type="SMR" id="A5G7W2"/>
<dbReference type="STRING" id="351605.Gura_3727"/>
<dbReference type="KEGG" id="gur:Gura_3727"/>
<dbReference type="HOGENOM" id="CLU_035714_4_0_7"/>
<dbReference type="OrthoDB" id="9806546at2"/>
<dbReference type="UniPathway" id="UPA00056">
    <property type="reaction ID" value="UER00092"/>
</dbReference>
<dbReference type="Proteomes" id="UP000006695">
    <property type="component" value="Chromosome"/>
</dbReference>
<dbReference type="GO" id="GO:0030604">
    <property type="term" value="F:1-deoxy-D-xylulose-5-phosphate reductoisomerase activity"/>
    <property type="evidence" value="ECO:0007669"/>
    <property type="project" value="UniProtKB-UniRule"/>
</dbReference>
<dbReference type="GO" id="GO:0030145">
    <property type="term" value="F:manganese ion binding"/>
    <property type="evidence" value="ECO:0007669"/>
    <property type="project" value="TreeGrafter"/>
</dbReference>
<dbReference type="GO" id="GO:0070402">
    <property type="term" value="F:NADPH binding"/>
    <property type="evidence" value="ECO:0007669"/>
    <property type="project" value="InterPro"/>
</dbReference>
<dbReference type="GO" id="GO:0051484">
    <property type="term" value="P:isopentenyl diphosphate biosynthetic process, methylerythritol 4-phosphate pathway involved in terpenoid biosynthetic process"/>
    <property type="evidence" value="ECO:0007669"/>
    <property type="project" value="TreeGrafter"/>
</dbReference>
<dbReference type="FunFam" id="3.40.50.720:FF:000045">
    <property type="entry name" value="1-deoxy-D-xylulose 5-phosphate reductoisomerase"/>
    <property type="match status" value="1"/>
</dbReference>
<dbReference type="Gene3D" id="1.10.1740.10">
    <property type="match status" value="1"/>
</dbReference>
<dbReference type="Gene3D" id="3.40.50.720">
    <property type="entry name" value="NAD(P)-binding Rossmann-like Domain"/>
    <property type="match status" value="1"/>
</dbReference>
<dbReference type="HAMAP" id="MF_00183">
    <property type="entry name" value="DXP_reductoisom"/>
    <property type="match status" value="1"/>
</dbReference>
<dbReference type="InterPro" id="IPR003821">
    <property type="entry name" value="DXP_reductoisomerase"/>
</dbReference>
<dbReference type="InterPro" id="IPR013644">
    <property type="entry name" value="DXP_reductoisomerase_C"/>
</dbReference>
<dbReference type="InterPro" id="IPR013512">
    <property type="entry name" value="DXP_reductoisomerase_N"/>
</dbReference>
<dbReference type="InterPro" id="IPR026877">
    <property type="entry name" value="DXPR_C"/>
</dbReference>
<dbReference type="InterPro" id="IPR036169">
    <property type="entry name" value="DXPR_C_sf"/>
</dbReference>
<dbReference type="InterPro" id="IPR036291">
    <property type="entry name" value="NAD(P)-bd_dom_sf"/>
</dbReference>
<dbReference type="NCBIfam" id="TIGR00243">
    <property type="entry name" value="Dxr"/>
    <property type="match status" value="1"/>
</dbReference>
<dbReference type="NCBIfam" id="NF009114">
    <property type="entry name" value="PRK12464.1"/>
    <property type="match status" value="1"/>
</dbReference>
<dbReference type="PANTHER" id="PTHR30525">
    <property type="entry name" value="1-DEOXY-D-XYLULOSE 5-PHOSPHATE REDUCTOISOMERASE"/>
    <property type="match status" value="1"/>
</dbReference>
<dbReference type="PANTHER" id="PTHR30525:SF0">
    <property type="entry name" value="1-DEOXY-D-XYLULOSE 5-PHOSPHATE REDUCTOISOMERASE, CHLOROPLASTIC"/>
    <property type="match status" value="1"/>
</dbReference>
<dbReference type="Pfam" id="PF08436">
    <property type="entry name" value="DXP_redisom_C"/>
    <property type="match status" value="1"/>
</dbReference>
<dbReference type="Pfam" id="PF02670">
    <property type="entry name" value="DXP_reductoisom"/>
    <property type="match status" value="1"/>
</dbReference>
<dbReference type="Pfam" id="PF13288">
    <property type="entry name" value="DXPR_C"/>
    <property type="match status" value="1"/>
</dbReference>
<dbReference type="PIRSF" id="PIRSF006205">
    <property type="entry name" value="Dxp_reductismrs"/>
    <property type="match status" value="1"/>
</dbReference>
<dbReference type="SUPFAM" id="SSF69055">
    <property type="entry name" value="1-deoxy-D-xylulose-5-phosphate reductoisomerase, C-terminal domain"/>
    <property type="match status" value="1"/>
</dbReference>
<dbReference type="SUPFAM" id="SSF55347">
    <property type="entry name" value="Glyceraldehyde-3-phosphate dehydrogenase-like, C-terminal domain"/>
    <property type="match status" value="1"/>
</dbReference>
<dbReference type="SUPFAM" id="SSF51735">
    <property type="entry name" value="NAD(P)-binding Rossmann-fold domains"/>
    <property type="match status" value="1"/>
</dbReference>
<sequence>MKKLAILGSTGSIGVSTLDIVAAHPDKFQVVALTAGGNLDLLKKQIEEFSPQLVAVLNEELAQKLQQMLSGKGPAILHGVEGMIAAATAADADMVVAAIVGAAGLVPTAAAIKAGKDIALANKETLVTAGRLIMDMVKAHGVKLYPVDSEHSAVFQSLQGHRMEDVKQIILTASGGPFFTWPAEKLAQVTVSDALNHPNWSMGQKITIDSASMMNKGLEVIEARWLFDIPAEKIAVNIHPQSIIHSMVEYIDGCVMAQLGIPDMKAPIAYALTYPGRVPTGVKPLDLTALSGLTFFNPDYSRFPALKLAYRALEDGESMPTVMNAANEVAVGAFLNGRIKFTAIAEAIEKTMDFHQPHLLNTIEEVLLVDRWGREKCKELLGIDKQ</sequence>
<feature type="chain" id="PRO_1000077335" description="1-deoxy-D-xylulose 5-phosphate reductoisomerase">
    <location>
        <begin position="1"/>
        <end position="386"/>
    </location>
</feature>
<feature type="binding site" evidence="1">
    <location>
        <position position="10"/>
    </location>
    <ligand>
        <name>NADPH</name>
        <dbReference type="ChEBI" id="CHEBI:57783"/>
    </ligand>
</feature>
<feature type="binding site" evidence="1">
    <location>
        <position position="11"/>
    </location>
    <ligand>
        <name>NADPH</name>
        <dbReference type="ChEBI" id="CHEBI:57783"/>
    </ligand>
</feature>
<feature type="binding site" evidence="1">
    <location>
        <position position="12"/>
    </location>
    <ligand>
        <name>NADPH</name>
        <dbReference type="ChEBI" id="CHEBI:57783"/>
    </ligand>
</feature>
<feature type="binding site" evidence="1">
    <location>
        <position position="13"/>
    </location>
    <ligand>
        <name>NADPH</name>
        <dbReference type="ChEBI" id="CHEBI:57783"/>
    </ligand>
</feature>
<feature type="binding site" evidence="1">
    <location>
        <position position="36"/>
    </location>
    <ligand>
        <name>NADPH</name>
        <dbReference type="ChEBI" id="CHEBI:57783"/>
    </ligand>
</feature>
<feature type="binding site" evidence="1">
    <location>
        <position position="38"/>
    </location>
    <ligand>
        <name>NADPH</name>
        <dbReference type="ChEBI" id="CHEBI:57783"/>
    </ligand>
</feature>
<feature type="binding site" evidence="1">
    <location>
        <position position="122"/>
    </location>
    <ligand>
        <name>NADPH</name>
        <dbReference type="ChEBI" id="CHEBI:57783"/>
    </ligand>
</feature>
<feature type="binding site" evidence="1">
    <location>
        <position position="123"/>
    </location>
    <ligand>
        <name>1-deoxy-D-xylulose 5-phosphate</name>
        <dbReference type="ChEBI" id="CHEBI:57792"/>
    </ligand>
</feature>
<feature type="binding site" evidence="1">
    <location>
        <position position="124"/>
    </location>
    <ligand>
        <name>NADPH</name>
        <dbReference type="ChEBI" id="CHEBI:57783"/>
    </ligand>
</feature>
<feature type="binding site" evidence="1">
    <location>
        <position position="148"/>
    </location>
    <ligand>
        <name>Mn(2+)</name>
        <dbReference type="ChEBI" id="CHEBI:29035"/>
    </ligand>
</feature>
<feature type="binding site" evidence="1">
    <location>
        <position position="149"/>
    </location>
    <ligand>
        <name>1-deoxy-D-xylulose 5-phosphate</name>
        <dbReference type="ChEBI" id="CHEBI:57792"/>
    </ligand>
</feature>
<feature type="binding site" evidence="1">
    <location>
        <position position="150"/>
    </location>
    <ligand>
        <name>1-deoxy-D-xylulose 5-phosphate</name>
        <dbReference type="ChEBI" id="CHEBI:57792"/>
    </ligand>
</feature>
<feature type="binding site" evidence="1">
    <location>
        <position position="150"/>
    </location>
    <ligand>
        <name>Mn(2+)</name>
        <dbReference type="ChEBI" id="CHEBI:29035"/>
    </ligand>
</feature>
<feature type="binding site" evidence="1">
    <location>
        <position position="174"/>
    </location>
    <ligand>
        <name>1-deoxy-D-xylulose 5-phosphate</name>
        <dbReference type="ChEBI" id="CHEBI:57792"/>
    </ligand>
</feature>
<feature type="binding site" evidence="1">
    <location>
        <position position="197"/>
    </location>
    <ligand>
        <name>1-deoxy-D-xylulose 5-phosphate</name>
        <dbReference type="ChEBI" id="CHEBI:57792"/>
    </ligand>
</feature>
<feature type="binding site" evidence="1">
    <location>
        <position position="203"/>
    </location>
    <ligand>
        <name>NADPH</name>
        <dbReference type="ChEBI" id="CHEBI:57783"/>
    </ligand>
</feature>
<feature type="binding site" evidence="1">
    <location>
        <position position="210"/>
    </location>
    <ligand>
        <name>1-deoxy-D-xylulose 5-phosphate</name>
        <dbReference type="ChEBI" id="CHEBI:57792"/>
    </ligand>
</feature>
<feature type="binding site" evidence="1">
    <location>
        <position position="215"/>
    </location>
    <ligand>
        <name>1-deoxy-D-xylulose 5-phosphate</name>
        <dbReference type="ChEBI" id="CHEBI:57792"/>
    </ligand>
</feature>
<feature type="binding site" evidence="1">
    <location>
        <position position="216"/>
    </location>
    <ligand>
        <name>1-deoxy-D-xylulose 5-phosphate</name>
        <dbReference type="ChEBI" id="CHEBI:57792"/>
    </ligand>
</feature>
<feature type="binding site" evidence="1">
    <location>
        <position position="219"/>
    </location>
    <ligand>
        <name>1-deoxy-D-xylulose 5-phosphate</name>
        <dbReference type="ChEBI" id="CHEBI:57792"/>
    </ligand>
</feature>
<feature type="binding site" evidence="1">
    <location>
        <position position="219"/>
    </location>
    <ligand>
        <name>Mn(2+)</name>
        <dbReference type="ChEBI" id="CHEBI:29035"/>
    </ligand>
</feature>
<evidence type="ECO:0000255" key="1">
    <source>
        <dbReference type="HAMAP-Rule" id="MF_00183"/>
    </source>
</evidence>
<keyword id="KW-0414">Isoprene biosynthesis</keyword>
<keyword id="KW-0464">Manganese</keyword>
<keyword id="KW-0479">Metal-binding</keyword>
<keyword id="KW-0521">NADP</keyword>
<keyword id="KW-0560">Oxidoreductase</keyword>
<keyword id="KW-1185">Reference proteome</keyword>
<protein>
    <recommendedName>
        <fullName evidence="1">1-deoxy-D-xylulose 5-phosphate reductoisomerase</fullName>
        <shortName evidence="1">DXP reductoisomerase</shortName>
        <ecNumber evidence="1">1.1.1.267</ecNumber>
    </recommendedName>
    <alternativeName>
        <fullName evidence="1">1-deoxyxylulose-5-phosphate reductoisomerase</fullName>
    </alternativeName>
    <alternativeName>
        <fullName evidence="1">2-C-methyl-D-erythritol 4-phosphate synthase</fullName>
    </alternativeName>
</protein>